<reference key="1">
    <citation type="submission" date="2008-04" db="EMBL/GenBank/DDBJ databases">
        <title>Complete sequence of Clostridium botulinum strain Eklund.</title>
        <authorList>
            <person name="Brinkac L.M."/>
            <person name="Brown J.L."/>
            <person name="Bruce D."/>
            <person name="Detter C."/>
            <person name="Munk C."/>
            <person name="Smith L.A."/>
            <person name="Smith T.J."/>
            <person name="Sutton G."/>
            <person name="Brettin T.S."/>
        </authorList>
    </citation>
    <scope>NUCLEOTIDE SEQUENCE [LARGE SCALE GENOMIC DNA]</scope>
    <source>
        <strain>Eklund 17B / Type B</strain>
    </source>
</reference>
<proteinExistence type="inferred from homology"/>
<name>Y1177_CLOBB</name>
<dbReference type="EMBL" id="CP001056">
    <property type="protein sequence ID" value="ACD24752.1"/>
    <property type="molecule type" value="Genomic_DNA"/>
</dbReference>
<dbReference type="KEGG" id="cbk:CLL_A1177"/>
<dbReference type="HOGENOM" id="CLU_146610_8_0_9"/>
<dbReference type="Proteomes" id="UP000001195">
    <property type="component" value="Chromosome"/>
</dbReference>
<dbReference type="HAMAP" id="MF_01448">
    <property type="entry name" value="UPF0473"/>
    <property type="match status" value="1"/>
</dbReference>
<dbReference type="InterPro" id="IPR009711">
    <property type="entry name" value="UPF0473"/>
</dbReference>
<dbReference type="PANTHER" id="PTHR40066">
    <property type="entry name" value="UPF0473 PROTEIN CBO2561/CLC_2432"/>
    <property type="match status" value="1"/>
</dbReference>
<dbReference type="PANTHER" id="PTHR40066:SF1">
    <property type="entry name" value="UPF0473 PROTEIN CBO2561_CLC_2432"/>
    <property type="match status" value="1"/>
</dbReference>
<dbReference type="Pfam" id="PF06949">
    <property type="entry name" value="DUF1292"/>
    <property type="match status" value="1"/>
</dbReference>
<organism>
    <name type="scientific">Clostridium botulinum (strain Eklund 17B / Type B)</name>
    <dbReference type="NCBI Taxonomy" id="935198"/>
    <lineage>
        <taxon>Bacteria</taxon>
        <taxon>Bacillati</taxon>
        <taxon>Bacillota</taxon>
        <taxon>Clostridia</taxon>
        <taxon>Eubacteriales</taxon>
        <taxon>Clostridiaceae</taxon>
        <taxon>Clostridium</taxon>
    </lineage>
</organism>
<gene>
    <name type="ordered locus">CLL_A1177</name>
</gene>
<protein>
    <recommendedName>
        <fullName evidence="1">UPF0473 protein CLL_A1177</fullName>
    </recommendedName>
</protein>
<sequence length="88" mass="10217">MQKDVEYIELLDEQGEQIKFKVITYFQIDEINGEYVVVTPAENDECDEAFVLKVISDEDGNETLVSIEDEKEFDLVEEAYNLVMSEQD</sequence>
<comment type="similarity">
    <text evidence="1">Belongs to the UPF0473 family.</text>
</comment>
<evidence type="ECO:0000255" key="1">
    <source>
        <dbReference type="HAMAP-Rule" id="MF_01448"/>
    </source>
</evidence>
<feature type="chain" id="PRO_1000200972" description="UPF0473 protein CLL_A1177">
    <location>
        <begin position="1"/>
        <end position="88"/>
    </location>
</feature>
<accession>B2THN3</accession>